<dbReference type="EC" id="2.8.1.8" evidence="1"/>
<dbReference type="EMBL" id="CR380955">
    <property type="protein sequence ID" value="CAG60659.1"/>
    <property type="molecule type" value="Genomic_DNA"/>
</dbReference>
<dbReference type="RefSeq" id="XP_447714.1">
    <property type="nucleotide sequence ID" value="XM_447714.1"/>
</dbReference>
<dbReference type="SMR" id="Q6FPY0"/>
<dbReference type="FunCoup" id="Q6FPY0">
    <property type="interactions" value="606"/>
</dbReference>
<dbReference type="STRING" id="284593.Q6FPY0"/>
<dbReference type="KEGG" id="cgr:2889354"/>
<dbReference type="eggNOG" id="KOG2672">
    <property type="taxonomic scope" value="Eukaryota"/>
</dbReference>
<dbReference type="HOGENOM" id="CLU_033144_2_0_1"/>
<dbReference type="InParanoid" id="Q6FPY0"/>
<dbReference type="OMA" id="PYCDIDF"/>
<dbReference type="UniPathway" id="UPA00538">
    <property type="reaction ID" value="UER00593"/>
</dbReference>
<dbReference type="Proteomes" id="UP000002428">
    <property type="component" value="Chromosome I"/>
</dbReference>
<dbReference type="GO" id="GO:0005739">
    <property type="term" value="C:mitochondrion"/>
    <property type="evidence" value="ECO:0007669"/>
    <property type="project" value="UniProtKB-SubCell"/>
</dbReference>
<dbReference type="GO" id="GO:0051539">
    <property type="term" value="F:4 iron, 4 sulfur cluster binding"/>
    <property type="evidence" value="ECO:0007669"/>
    <property type="project" value="UniProtKB-UniRule"/>
</dbReference>
<dbReference type="GO" id="GO:0016992">
    <property type="term" value="F:lipoate synthase activity"/>
    <property type="evidence" value="ECO:0007669"/>
    <property type="project" value="UniProtKB-UniRule"/>
</dbReference>
<dbReference type="GO" id="GO:0046872">
    <property type="term" value="F:metal ion binding"/>
    <property type="evidence" value="ECO:0007669"/>
    <property type="project" value="UniProtKB-KW"/>
</dbReference>
<dbReference type="CDD" id="cd01335">
    <property type="entry name" value="Radical_SAM"/>
    <property type="match status" value="1"/>
</dbReference>
<dbReference type="FunFam" id="3.20.20.70:FF:000036">
    <property type="entry name" value="Lipoyl synthase, mitochondrial"/>
    <property type="match status" value="1"/>
</dbReference>
<dbReference type="Gene3D" id="3.20.20.70">
    <property type="entry name" value="Aldolase class I"/>
    <property type="match status" value="1"/>
</dbReference>
<dbReference type="HAMAP" id="MF_00206">
    <property type="entry name" value="Lipoyl_synth"/>
    <property type="match status" value="1"/>
</dbReference>
<dbReference type="InterPro" id="IPR013785">
    <property type="entry name" value="Aldolase_TIM"/>
</dbReference>
<dbReference type="InterPro" id="IPR006638">
    <property type="entry name" value="Elp3/MiaA/NifB-like_rSAM"/>
</dbReference>
<dbReference type="InterPro" id="IPR031691">
    <property type="entry name" value="LIAS_N"/>
</dbReference>
<dbReference type="InterPro" id="IPR003698">
    <property type="entry name" value="Lipoyl_synth"/>
</dbReference>
<dbReference type="InterPro" id="IPR007197">
    <property type="entry name" value="rSAM"/>
</dbReference>
<dbReference type="NCBIfam" id="TIGR00510">
    <property type="entry name" value="lipA"/>
    <property type="match status" value="1"/>
</dbReference>
<dbReference type="NCBIfam" id="NF004019">
    <property type="entry name" value="PRK05481.1"/>
    <property type="match status" value="1"/>
</dbReference>
<dbReference type="NCBIfam" id="NF009544">
    <property type="entry name" value="PRK12928.1"/>
    <property type="match status" value="1"/>
</dbReference>
<dbReference type="PANTHER" id="PTHR10949">
    <property type="entry name" value="LIPOYL SYNTHASE"/>
    <property type="match status" value="1"/>
</dbReference>
<dbReference type="PANTHER" id="PTHR10949:SF0">
    <property type="entry name" value="LIPOYL SYNTHASE, MITOCHONDRIAL"/>
    <property type="match status" value="1"/>
</dbReference>
<dbReference type="Pfam" id="PF16881">
    <property type="entry name" value="LIAS_N"/>
    <property type="match status" value="1"/>
</dbReference>
<dbReference type="Pfam" id="PF04055">
    <property type="entry name" value="Radical_SAM"/>
    <property type="match status" value="1"/>
</dbReference>
<dbReference type="SFLD" id="SFLDF00271">
    <property type="entry name" value="lipoyl_synthase"/>
    <property type="match status" value="1"/>
</dbReference>
<dbReference type="SFLD" id="SFLDG01058">
    <property type="entry name" value="lipoyl_synthase_like"/>
    <property type="match status" value="1"/>
</dbReference>
<dbReference type="SMART" id="SM00729">
    <property type="entry name" value="Elp3"/>
    <property type="match status" value="1"/>
</dbReference>
<dbReference type="SUPFAM" id="SSF102114">
    <property type="entry name" value="Radical SAM enzymes"/>
    <property type="match status" value="1"/>
</dbReference>
<dbReference type="PROSITE" id="PS51918">
    <property type="entry name" value="RADICAL_SAM"/>
    <property type="match status" value="1"/>
</dbReference>
<name>LIPA_CANGA</name>
<comment type="function">
    <text evidence="1">Catalyzes the radical-mediated insertion of two sulfur atoms into the C-6 and C-8 positions of the octanoyl moiety bound to the lipoyl domains of lipoate-dependent enzymes, thereby converting the octanoylated domains into lipoylated derivatives.</text>
</comment>
<comment type="catalytic activity">
    <reaction evidence="1">
        <text>[[Fe-S] cluster scaffold protein carrying a second [4Fe-4S](2+) cluster] + N(6)-octanoyl-L-lysyl-[protein] + 2 oxidized [2Fe-2S]-[ferredoxin] + 2 S-adenosyl-L-methionine + 4 H(+) = [[Fe-S] cluster scaffold protein] + N(6)-[(R)-dihydrolipoyl]-L-lysyl-[protein] + 4 Fe(3+) + 2 hydrogen sulfide + 2 5'-deoxyadenosine + 2 L-methionine + 2 reduced [2Fe-2S]-[ferredoxin]</text>
        <dbReference type="Rhea" id="RHEA:16585"/>
        <dbReference type="Rhea" id="RHEA-COMP:9928"/>
        <dbReference type="Rhea" id="RHEA-COMP:10000"/>
        <dbReference type="Rhea" id="RHEA-COMP:10001"/>
        <dbReference type="Rhea" id="RHEA-COMP:10475"/>
        <dbReference type="Rhea" id="RHEA-COMP:14568"/>
        <dbReference type="Rhea" id="RHEA-COMP:14569"/>
        <dbReference type="ChEBI" id="CHEBI:15378"/>
        <dbReference type="ChEBI" id="CHEBI:17319"/>
        <dbReference type="ChEBI" id="CHEBI:29034"/>
        <dbReference type="ChEBI" id="CHEBI:29919"/>
        <dbReference type="ChEBI" id="CHEBI:33722"/>
        <dbReference type="ChEBI" id="CHEBI:33737"/>
        <dbReference type="ChEBI" id="CHEBI:33738"/>
        <dbReference type="ChEBI" id="CHEBI:57844"/>
        <dbReference type="ChEBI" id="CHEBI:59789"/>
        <dbReference type="ChEBI" id="CHEBI:78809"/>
        <dbReference type="ChEBI" id="CHEBI:83100"/>
        <dbReference type="EC" id="2.8.1.8"/>
    </reaction>
</comment>
<comment type="cofactor">
    <cofactor evidence="1">
        <name>[4Fe-4S] cluster</name>
        <dbReference type="ChEBI" id="CHEBI:49883"/>
    </cofactor>
    <text evidence="1">Binds 2 [4Fe-4S] clusters per subunit. One cluster is coordinated with 3 cysteines and an exchangeable S-adenosyl-L-methionine.</text>
</comment>
<comment type="pathway">
    <text evidence="1">Protein modification; protein lipoylation via endogenous pathway; protein N(6)-(lipoyl)lysine from octanoyl-[acyl-carrier-protein]: step 2/2.</text>
</comment>
<comment type="subcellular location">
    <subcellularLocation>
        <location evidence="1">Mitochondrion</location>
    </subcellularLocation>
</comment>
<comment type="similarity">
    <text evidence="1">Belongs to the radical SAM superfamily. Lipoyl synthase family.</text>
</comment>
<organism>
    <name type="scientific">Candida glabrata (strain ATCC 2001 / BCRC 20586 / JCM 3761 / NBRC 0622 / NRRL Y-65 / CBS 138)</name>
    <name type="common">Yeast</name>
    <name type="synonym">Nakaseomyces glabratus</name>
    <dbReference type="NCBI Taxonomy" id="284593"/>
    <lineage>
        <taxon>Eukaryota</taxon>
        <taxon>Fungi</taxon>
        <taxon>Dikarya</taxon>
        <taxon>Ascomycota</taxon>
        <taxon>Saccharomycotina</taxon>
        <taxon>Saccharomycetes</taxon>
        <taxon>Saccharomycetales</taxon>
        <taxon>Saccharomycetaceae</taxon>
        <taxon>Nakaseomyces</taxon>
    </lineage>
</organism>
<keyword id="KW-0004">4Fe-4S</keyword>
<keyword id="KW-0408">Iron</keyword>
<keyword id="KW-0411">Iron-sulfur</keyword>
<keyword id="KW-0479">Metal-binding</keyword>
<keyword id="KW-0496">Mitochondrion</keyword>
<keyword id="KW-1185">Reference proteome</keyword>
<keyword id="KW-0949">S-adenosyl-L-methionine</keyword>
<keyword id="KW-0808">Transferase</keyword>
<keyword id="KW-0809">Transit peptide</keyword>
<accession>Q6FPY0</accession>
<evidence type="ECO:0000255" key="1">
    <source>
        <dbReference type="HAMAP-Rule" id="MF_03123"/>
    </source>
</evidence>
<evidence type="ECO:0000255" key="2">
    <source>
        <dbReference type="PROSITE-ProRule" id="PRU01266"/>
    </source>
</evidence>
<evidence type="ECO:0000256" key="3">
    <source>
        <dbReference type="SAM" id="MobiDB-lite"/>
    </source>
</evidence>
<proteinExistence type="inferred from homology"/>
<gene>
    <name type="ordered locus">CAGL0I10923g</name>
</gene>
<feature type="transit peptide" description="Mitochondrion" evidence="1">
    <location>
        <begin position="1"/>
        <end position="18"/>
    </location>
</feature>
<feature type="chain" id="PRO_0000398260" description="Lipoyl synthase, mitochondrial">
    <location>
        <begin position="19"/>
        <end position="388"/>
    </location>
</feature>
<feature type="domain" description="Radical SAM core" evidence="2">
    <location>
        <begin position="134"/>
        <end position="355"/>
    </location>
</feature>
<feature type="region of interest" description="Disordered" evidence="3">
    <location>
        <begin position="22"/>
        <end position="43"/>
    </location>
</feature>
<feature type="compositionally biased region" description="Low complexity" evidence="3">
    <location>
        <begin position="22"/>
        <end position="39"/>
    </location>
</feature>
<feature type="binding site" evidence="1">
    <location>
        <position position="120"/>
    </location>
    <ligand>
        <name>[4Fe-4S] cluster</name>
        <dbReference type="ChEBI" id="CHEBI:49883"/>
        <label>1</label>
    </ligand>
</feature>
<feature type="binding site" evidence="1">
    <location>
        <position position="125"/>
    </location>
    <ligand>
        <name>[4Fe-4S] cluster</name>
        <dbReference type="ChEBI" id="CHEBI:49883"/>
        <label>1</label>
    </ligand>
</feature>
<feature type="binding site" evidence="1">
    <location>
        <position position="131"/>
    </location>
    <ligand>
        <name>[4Fe-4S] cluster</name>
        <dbReference type="ChEBI" id="CHEBI:49883"/>
        <label>1</label>
    </ligand>
</feature>
<feature type="binding site" evidence="1">
    <location>
        <position position="151"/>
    </location>
    <ligand>
        <name>[4Fe-4S] cluster</name>
        <dbReference type="ChEBI" id="CHEBI:49883"/>
        <label>2</label>
        <note>4Fe-4S-S-AdoMet</note>
    </ligand>
</feature>
<feature type="binding site" evidence="1">
    <location>
        <position position="155"/>
    </location>
    <ligand>
        <name>[4Fe-4S] cluster</name>
        <dbReference type="ChEBI" id="CHEBI:49883"/>
        <label>2</label>
        <note>4Fe-4S-S-AdoMet</note>
    </ligand>
</feature>
<feature type="binding site" evidence="1">
    <location>
        <position position="158"/>
    </location>
    <ligand>
        <name>[4Fe-4S] cluster</name>
        <dbReference type="ChEBI" id="CHEBI:49883"/>
        <label>2</label>
        <note>4Fe-4S-S-AdoMet</note>
    </ligand>
</feature>
<feature type="binding site" evidence="1">
    <location>
        <position position="366"/>
    </location>
    <ligand>
        <name>[4Fe-4S] cluster</name>
        <dbReference type="ChEBI" id="CHEBI:49883"/>
        <label>1</label>
    </ligand>
</feature>
<sequence>MRLTTVQRRFLVSTKAKVSGASISSTANTGSASAGAPNGQTRRRRRITEFKDALNLGPSFEDFVSGRAAGFTVVDPLEQMRQDREEYKKLPKWLKVPIPKGVNYHKLKKDVKELKLSTVCEEARCPNIGECWGGKDKSKATATIMLLGDTCTRGCRFCSVKTNRNPAKPDPTEPENTAEAISRWGLGYVVLTTVDRDDLPDGGAHHLAETVIKIKQKAPKTLVEALTGDFLGNLEMVDVMAKSGLDVYAHNLETVEALTPHVRDRRAGYRQSLNVLKRAKETVPSLITKTSVMLGLGETDDQIIQTMQDLRAINCDVITFGQYMRPTKRHMKVVEYVRPEKFDYWKDKAKEMGFLYCASGPLVRSSYKAGEAFIENVLNKRKQDNKRI</sequence>
<reference key="1">
    <citation type="journal article" date="2004" name="Nature">
        <title>Genome evolution in yeasts.</title>
        <authorList>
            <person name="Dujon B."/>
            <person name="Sherman D."/>
            <person name="Fischer G."/>
            <person name="Durrens P."/>
            <person name="Casaregola S."/>
            <person name="Lafontaine I."/>
            <person name="de Montigny J."/>
            <person name="Marck C."/>
            <person name="Neuveglise C."/>
            <person name="Talla E."/>
            <person name="Goffard N."/>
            <person name="Frangeul L."/>
            <person name="Aigle M."/>
            <person name="Anthouard V."/>
            <person name="Babour A."/>
            <person name="Barbe V."/>
            <person name="Barnay S."/>
            <person name="Blanchin S."/>
            <person name="Beckerich J.-M."/>
            <person name="Beyne E."/>
            <person name="Bleykasten C."/>
            <person name="Boisrame A."/>
            <person name="Boyer J."/>
            <person name="Cattolico L."/>
            <person name="Confanioleri F."/>
            <person name="de Daruvar A."/>
            <person name="Despons L."/>
            <person name="Fabre E."/>
            <person name="Fairhead C."/>
            <person name="Ferry-Dumazet H."/>
            <person name="Groppi A."/>
            <person name="Hantraye F."/>
            <person name="Hennequin C."/>
            <person name="Jauniaux N."/>
            <person name="Joyet P."/>
            <person name="Kachouri R."/>
            <person name="Kerrest A."/>
            <person name="Koszul R."/>
            <person name="Lemaire M."/>
            <person name="Lesur I."/>
            <person name="Ma L."/>
            <person name="Muller H."/>
            <person name="Nicaud J.-M."/>
            <person name="Nikolski M."/>
            <person name="Oztas S."/>
            <person name="Ozier-Kalogeropoulos O."/>
            <person name="Pellenz S."/>
            <person name="Potier S."/>
            <person name="Richard G.-F."/>
            <person name="Straub M.-L."/>
            <person name="Suleau A."/>
            <person name="Swennen D."/>
            <person name="Tekaia F."/>
            <person name="Wesolowski-Louvel M."/>
            <person name="Westhof E."/>
            <person name="Wirth B."/>
            <person name="Zeniou-Meyer M."/>
            <person name="Zivanovic Y."/>
            <person name="Bolotin-Fukuhara M."/>
            <person name="Thierry A."/>
            <person name="Bouchier C."/>
            <person name="Caudron B."/>
            <person name="Scarpelli C."/>
            <person name="Gaillardin C."/>
            <person name="Weissenbach J."/>
            <person name="Wincker P."/>
            <person name="Souciet J.-L."/>
        </authorList>
    </citation>
    <scope>NUCLEOTIDE SEQUENCE [LARGE SCALE GENOMIC DNA]</scope>
    <source>
        <strain>ATCC 2001 / BCRC 20586 / JCM 3761 / NBRC 0622 / NRRL Y-65 / CBS 138</strain>
    </source>
</reference>
<protein>
    <recommendedName>
        <fullName evidence="1">Lipoyl synthase, mitochondrial</fullName>
        <ecNumber evidence="1">2.8.1.8</ecNumber>
    </recommendedName>
    <alternativeName>
        <fullName evidence="1">Lipoate synthase</fullName>
        <shortName evidence="1">LS</shortName>
        <shortName evidence="1">Lip-syn</shortName>
    </alternativeName>
    <alternativeName>
        <fullName evidence="1">Lipoic acid synthase</fullName>
    </alternativeName>
</protein>